<organism>
    <name type="scientific">Brucella melitensis biotype 2 (strain ATCC 23457)</name>
    <dbReference type="NCBI Taxonomy" id="546272"/>
    <lineage>
        <taxon>Bacteria</taxon>
        <taxon>Pseudomonadati</taxon>
        <taxon>Pseudomonadota</taxon>
        <taxon>Alphaproteobacteria</taxon>
        <taxon>Hyphomicrobiales</taxon>
        <taxon>Brucellaceae</taxon>
        <taxon>Brucella/Ochrobactrum group</taxon>
        <taxon>Brucella</taxon>
    </lineage>
</organism>
<gene>
    <name evidence="1" type="primary">glyA</name>
    <name type="ordered locus">BMEA_A0804</name>
</gene>
<keyword id="KW-0028">Amino-acid biosynthesis</keyword>
<keyword id="KW-0963">Cytoplasm</keyword>
<keyword id="KW-0554">One-carbon metabolism</keyword>
<keyword id="KW-0663">Pyridoxal phosphate</keyword>
<keyword id="KW-0808">Transferase</keyword>
<reference key="1">
    <citation type="submission" date="2009-03" db="EMBL/GenBank/DDBJ databases">
        <title>Brucella melitensis ATCC 23457 whole genome shotgun sequencing project.</title>
        <authorList>
            <person name="Setubal J.C."/>
            <person name="Boyle S."/>
            <person name="Crasta O.R."/>
            <person name="Gillespie J.J."/>
            <person name="Kenyon R.W."/>
            <person name="Lu J."/>
            <person name="Mane S."/>
            <person name="Nagrani S."/>
            <person name="Shallom J.M."/>
            <person name="Shallom S."/>
            <person name="Shukla M."/>
            <person name="Snyder E.E."/>
            <person name="Sobral B.W."/>
            <person name="Wattam A.R."/>
            <person name="Will R."/>
            <person name="Williams K."/>
            <person name="Yoo H."/>
            <person name="Munk C."/>
            <person name="Tapia R."/>
            <person name="Han C."/>
            <person name="Detter J.C."/>
            <person name="Bruce D."/>
            <person name="Brettin T.S."/>
        </authorList>
    </citation>
    <scope>NUCLEOTIDE SEQUENCE [LARGE SCALE GENOMIC DNA]</scope>
    <source>
        <strain>ATCC 23457</strain>
    </source>
</reference>
<proteinExistence type="inferred from homology"/>
<comment type="function">
    <text evidence="1">Catalyzes the reversible interconversion of serine and glycine with tetrahydrofolate (THF) serving as the one-carbon carrier. This reaction serves as the major source of one-carbon groups required for the biosynthesis of purines, thymidylate, methionine, and other important biomolecules. Also exhibits THF-independent aldolase activity toward beta-hydroxyamino acids, producing glycine and aldehydes, via a retro-aldol mechanism.</text>
</comment>
<comment type="catalytic activity">
    <reaction evidence="1">
        <text>(6R)-5,10-methylene-5,6,7,8-tetrahydrofolate + glycine + H2O = (6S)-5,6,7,8-tetrahydrofolate + L-serine</text>
        <dbReference type="Rhea" id="RHEA:15481"/>
        <dbReference type="ChEBI" id="CHEBI:15377"/>
        <dbReference type="ChEBI" id="CHEBI:15636"/>
        <dbReference type="ChEBI" id="CHEBI:33384"/>
        <dbReference type="ChEBI" id="CHEBI:57305"/>
        <dbReference type="ChEBI" id="CHEBI:57453"/>
        <dbReference type="EC" id="2.1.2.1"/>
    </reaction>
</comment>
<comment type="cofactor">
    <cofactor evidence="1">
        <name>pyridoxal 5'-phosphate</name>
        <dbReference type="ChEBI" id="CHEBI:597326"/>
    </cofactor>
</comment>
<comment type="pathway">
    <text evidence="1">One-carbon metabolism; tetrahydrofolate interconversion.</text>
</comment>
<comment type="pathway">
    <text evidence="1">Amino-acid biosynthesis; glycine biosynthesis; glycine from L-serine: step 1/1.</text>
</comment>
<comment type="subunit">
    <text evidence="1">Homodimer.</text>
</comment>
<comment type="subcellular location">
    <subcellularLocation>
        <location evidence="1">Cytoplasm</location>
    </subcellularLocation>
</comment>
<comment type="similarity">
    <text evidence="1">Belongs to the SHMT family.</text>
</comment>
<sequence length="438" mass="47085">MSQANAATKASSDVFFNASLEDIDPEIFGAIRNELGRQRHEIELIASENIVSRAVLEAQGSILTNKYAEGYPGKRYYGGCQYVDVVEELAIERAKKLFGAEFANVQPNSGSQMNQAVFLALLQPGDTFMGLDLNSGGHLTHGSPVNMSGKWFNVVSYGVRKDDHLLDMDEVARLARENKPKLILAGGTAYSRIWDWKRFREIADEVGAYLMVDMAHIAGLVAGGQHPSPVPHAHVCTTTTHKSLRGPRGGMILTNDADIAKKINSAVFPGLQGGPLMHVIAGKAVAFAEALKPEFKLYAKNVVDNARALAEELKSHGLDIVSGGTDNHLMLVDLRPKNATGKRAEAALGRANITCNKNGIPFDPEKPFVTSGVRLGTPAGTTRGFGVAEFKEIGSLIAEVLDGLKVANSDEGNAAVEQAVKEKVIALTGRFPMYGYQG</sequence>
<protein>
    <recommendedName>
        <fullName evidence="1">Serine hydroxymethyltransferase</fullName>
        <shortName evidence="1">SHMT</shortName>
        <shortName evidence="1">Serine methylase</shortName>
        <ecNumber evidence="1">2.1.2.1</ecNumber>
    </recommendedName>
</protein>
<accession>C0RIA2</accession>
<feature type="chain" id="PRO_1000195434" description="Serine hydroxymethyltransferase">
    <location>
        <begin position="1"/>
        <end position="438"/>
    </location>
</feature>
<feature type="binding site" evidence="1">
    <location>
        <position position="133"/>
    </location>
    <ligand>
        <name>(6S)-5,6,7,8-tetrahydrofolate</name>
        <dbReference type="ChEBI" id="CHEBI:57453"/>
    </ligand>
</feature>
<feature type="binding site" evidence="1">
    <location>
        <begin position="137"/>
        <end position="139"/>
    </location>
    <ligand>
        <name>(6S)-5,6,7,8-tetrahydrofolate</name>
        <dbReference type="ChEBI" id="CHEBI:57453"/>
    </ligand>
</feature>
<feature type="site" description="Plays an important role in substrate specificity" evidence="1">
    <location>
        <position position="241"/>
    </location>
</feature>
<feature type="modified residue" description="N6-(pyridoxal phosphate)lysine" evidence="1">
    <location>
        <position position="242"/>
    </location>
</feature>
<dbReference type="EC" id="2.1.2.1" evidence="1"/>
<dbReference type="EMBL" id="CP001488">
    <property type="protein sequence ID" value="ACO00560.1"/>
    <property type="molecule type" value="Genomic_DNA"/>
</dbReference>
<dbReference type="RefSeq" id="WP_004686493.1">
    <property type="nucleotide sequence ID" value="NC_012441.1"/>
</dbReference>
<dbReference type="SMR" id="C0RIA2"/>
<dbReference type="GeneID" id="97533925"/>
<dbReference type="KEGG" id="bmi:BMEA_A0804"/>
<dbReference type="HOGENOM" id="CLU_022477_2_1_5"/>
<dbReference type="UniPathway" id="UPA00193"/>
<dbReference type="UniPathway" id="UPA00288">
    <property type="reaction ID" value="UER01023"/>
</dbReference>
<dbReference type="Proteomes" id="UP000001748">
    <property type="component" value="Chromosome I"/>
</dbReference>
<dbReference type="GO" id="GO:0005829">
    <property type="term" value="C:cytosol"/>
    <property type="evidence" value="ECO:0007669"/>
    <property type="project" value="TreeGrafter"/>
</dbReference>
<dbReference type="GO" id="GO:0004372">
    <property type="term" value="F:glycine hydroxymethyltransferase activity"/>
    <property type="evidence" value="ECO:0007669"/>
    <property type="project" value="UniProtKB-UniRule"/>
</dbReference>
<dbReference type="GO" id="GO:0030170">
    <property type="term" value="F:pyridoxal phosphate binding"/>
    <property type="evidence" value="ECO:0007669"/>
    <property type="project" value="UniProtKB-UniRule"/>
</dbReference>
<dbReference type="GO" id="GO:0019264">
    <property type="term" value="P:glycine biosynthetic process from serine"/>
    <property type="evidence" value="ECO:0007669"/>
    <property type="project" value="UniProtKB-UniRule"/>
</dbReference>
<dbReference type="GO" id="GO:0035999">
    <property type="term" value="P:tetrahydrofolate interconversion"/>
    <property type="evidence" value="ECO:0007669"/>
    <property type="project" value="UniProtKB-UniRule"/>
</dbReference>
<dbReference type="CDD" id="cd00378">
    <property type="entry name" value="SHMT"/>
    <property type="match status" value="1"/>
</dbReference>
<dbReference type="FunFam" id="3.40.640.10:FF:000001">
    <property type="entry name" value="Serine hydroxymethyltransferase"/>
    <property type="match status" value="1"/>
</dbReference>
<dbReference type="FunFam" id="3.90.1150.10:FF:000003">
    <property type="entry name" value="Serine hydroxymethyltransferase"/>
    <property type="match status" value="1"/>
</dbReference>
<dbReference type="Gene3D" id="3.90.1150.10">
    <property type="entry name" value="Aspartate Aminotransferase, domain 1"/>
    <property type="match status" value="1"/>
</dbReference>
<dbReference type="Gene3D" id="3.40.640.10">
    <property type="entry name" value="Type I PLP-dependent aspartate aminotransferase-like (Major domain)"/>
    <property type="match status" value="1"/>
</dbReference>
<dbReference type="HAMAP" id="MF_00051">
    <property type="entry name" value="SHMT"/>
    <property type="match status" value="1"/>
</dbReference>
<dbReference type="InterPro" id="IPR015424">
    <property type="entry name" value="PyrdxlP-dep_Trfase"/>
</dbReference>
<dbReference type="InterPro" id="IPR015421">
    <property type="entry name" value="PyrdxlP-dep_Trfase_major"/>
</dbReference>
<dbReference type="InterPro" id="IPR015422">
    <property type="entry name" value="PyrdxlP-dep_Trfase_small"/>
</dbReference>
<dbReference type="InterPro" id="IPR001085">
    <property type="entry name" value="Ser_HO-MeTrfase"/>
</dbReference>
<dbReference type="InterPro" id="IPR049943">
    <property type="entry name" value="Ser_HO-MeTrfase-like"/>
</dbReference>
<dbReference type="InterPro" id="IPR019798">
    <property type="entry name" value="Ser_HO-MeTrfase_PLP_BS"/>
</dbReference>
<dbReference type="InterPro" id="IPR039429">
    <property type="entry name" value="SHMT-like_dom"/>
</dbReference>
<dbReference type="NCBIfam" id="NF000586">
    <property type="entry name" value="PRK00011.1"/>
    <property type="match status" value="1"/>
</dbReference>
<dbReference type="PANTHER" id="PTHR11680">
    <property type="entry name" value="SERINE HYDROXYMETHYLTRANSFERASE"/>
    <property type="match status" value="1"/>
</dbReference>
<dbReference type="PANTHER" id="PTHR11680:SF35">
    <property type="entry name" value="SERINE HYDROXYMETHYLTRANSFERASE 1"/>
    <property type="match status" value="1"/>
</dbReference>
<dbReference type="Pfam" id="PF00464">
    <property type="entry name" value="SHMT"/>
    <property type="match status" value="1"/>
</dbReference>
<dbReference type="PIRSF" id="PIRSF000412">
    <property type="entry name" value="SHMT"/>
    <property type="match status" value="1"/>
</dbReference>
<dbReference type="SUPFAM" id="SSF53383">
    <property type="entry name" value="PLP-dependent transferases"/>
    <property type="match status" value="1"/>
</dbReference>
<dbReference type="PROSITE" id="PS00096">
    <property type="entry name" value="SHMT"/>
    <property type="match status" value="1"/>
</dbReference>
<name>GLYA_BRUMB</name>
<evidence type="ECO:0000255" key="1">
    <source>
        <dbReference type="HAMAP-Rule" id="MF_00051"/>
    </source>
</evidence>